<organism>
    <name type="scientific">Staphylococcus aureus (strain Newman)</name>
    <dbReference type="NCBI Taxonomy" id="426430"/>
    <lineage>
        <taxon>Bacteria</taxon>
        <taxon>Bacillati</taxon>
        <taxon>Bacillota</taxon>
        <taxon>Bacilli</taxon>
        <taxon>Bacillales</taxon>
        <taxon>Staphylococcaceae</taxon>
        <taxon>Staphylococcus</taxon>
    </lineage>
</organism>
<proteinExistence type="inferred from homology"/>
<evidence type="ECO:0000255" key="1">
    <source>
        <dbReference type="HAMAP-Rule" id="MF_00734"/>
    </source>
</evidence>
<accession>A6QJ36</accession>
<gene>
    <name evidence="1" type="primary">lacD</name>
    <name type="ordered locus">NWMN_2096</name>
</gene>
<comment type="catalytic activity">
    <reaction evidence="1">
        <text>D-tagatofuranose 1,6-bisphosphate = D-glyceraldehyde 3-phosphate + dihydroxyacetone phosphate</text>
        <dbReference type="Rhea" id="RHEA:22948"/>
        <dbReference type="ChEBI" id="CHEBI:57642"/>
        <dbReference type="ChEBI" id="CHEBI:58694"/>
        <dbReference type="ChEBI" id="CHEBI:59776"/>
        <dbReference type="EC" id="4.1.2.40"/>
    </reaction>
</comment>
<comment type="pathway">
    <text evidence="1">Carbohydrate metabolism; D-tagatose 6-phosphate degradation; D-glyceraldehyde 3-phosphate and glycerone phosphate from D-tagatose 6-phosphate: step 2/2.</text>
</comment>
<comment type="similarity">
    <text evidence="1">Belongs to the aldolase LacD family.</text>
</comment>
<feature type="chain" id="PRO_1000072788" description="Tagatose 1,6-diphosphate aldolase">
    <location>
        <begin position="1"/>
        <end position="326"/>
    </location>
</feature>
<sequence>MSKSNQKIASIEQLSNNEGIISALAFDQRGALKRMMAKHQTEEPTVAQIEQLKVLVAEELTQYASSILLDPEYGLPASDARNKDCGLLLAYEKTGYDVNAKGRLPDCLVEWSAKRLKEQGANAVKFLLYYDVDDAEEINIQKKAYIERIGSECVAEDIPFFLEVLTYDDNIPDNGSVEFAKVKPRKVNEAMKLFSEPRFNVDVLKVEVPVNMKYVEGFAEGEVVYTKEEAAQHFKDQDAATHLPYIYLSAGVSAELFQETLKFAHEAGAKFNGVLCGRATWSGAVQVYIEQGEDAAREWLRTTGFKNIDDLNKVLKDTATSWKQRK</sequence>
<keyword id="KW-0423">Lactose metabolism</keyword>
<keyword id="KW-0456">Lyase</keyword>
<protein>
    <recommendedName>
        <fullName evidence="1">Tagatose 1,6-diphosphate aldolase</fullName>
        <ecNumber evidence="1">4.1.2.40</ecNumber>
    </recommendedName>
    <alternativeName>
        <fullName evidence="1">D-tagatose-1,6-bisphosphate aldolase</fullName>
    </alternativeName>
    <alternativeName>
        <fullName evidence="1">Tagatose-bisphosphate aldolase</fullName>
    </alternativeName>
</protein>
<name>LACD_STAAE</name>
<reference key="1">
    <citation type="journal article" date="2008" name="J. Bacteriol.">
        <title>Genome sequence of Staphylococcus aureus strain Newman and comparative analysis of staphylococcal genomes: polymorphism and evolution of two major pathogenicity islands.</title>
        <authorList>
            <person name="Baba T."/>
            <person name="Bae T."/>
            <person name="Schneewind O."/>
            <person name="Takeuchi F."/>
            <person name="Hiramatsu K."/>
        </authorList>
    </citation>
    <scope>NUCLEOTIDE SEQUENCE [LARGE SCALE GENOMIC DNA]</scope>
    <source>
        <strain>Newman</strain>
    </source>
</reference>
<dbReference type="EC" id="4.1.2.40" evidence="1"/>
<dbReference type="EMBL" id="AP009351">
    <property type="protein sequence ID" value="BAF68368.1"/>
    <property type="molecule type" value="Genomic_DNA"/>
</dbReference>
<dbReference type="RefSeq" id="WP_000047009.1">
    <property type="nucleotide sequence ID" value="NZ_JBBIAE010000006.1"/>
</dbReference>
<dbReference type="SMR" id="A6QJ36"/>
<dbReference type="KEGG" id="sae:NWMN_2096"/>
<dbReference type="HOGENOM" id="CLU_058971_0_1_9"/>
<dbReference type="UniPathway" id="UPA00704">
    <property type="reaction ID" value="UER00716"/>
</dbReference>
<dbReference type="Proteomes" id="UP000006386">
    <property type="component" value="Chromosome"/>
</dbReference>
<dbReference type="GO" id="GO:0061595">
    <property type="term" value="F:6-deoxy-6-sulfofructose-1-phosphate aldolase activity"/>
    <property type="evidence" value="ECO:0007669"/>
    <property type="project" value="TreeGrafter"/>
</dbReference>
<dbReference type="GO" id="GO:0009024">
    <property type="term" value="F:tagatose-6-phosphate kinase activity"/>
    <property type="evidence" value="ECO:0007669"/>
    <property type="project" value="InterPro"/>
</dbReference>
<dbReference type="GO" id="GO:0009025">
    <property type="term" value="F:tagatose-bisphosphate aldolase activity"/>
    <property type="evidence" value="ECO:0007669"/>
    <property type="project" value="UniProtKB-UniRule"/>
</dbReference>
<dbReference type="GO" id="GO:1902777">
    <property type="term" value="P:6-sulfoquinovose(1-) catabolic process"/>
    <property type="evidence" value="ECO:0007669"/>
    <property type="project" value="TreeGrafter"/>
</dbReference>
<dbReference type="GO" id="GO:2001059">
    <property type="term" value="P:D-tagatose 6-phosphate catabolic process"/>
    <property type="evidence" value="ECO:0007669"/>
    <property type="project" value="UniProtKB-UniRule"/>
</dbReference>
<dbReference type="GO" id="GO:0019512">
    <property type="term" value="P:lactose catabolic process via tagatose-6-phosphate"/>
    <property type="evidence" value="ECO:0007669"/>
    <property type="project" value="InterPro"/>
</dbReference>
<dbReference type="FunFam" id="3.20.20.70:FF:000137">
    <property type="entry name" value="Tagatose 1,6-diphosphate aldolase 2"/>
    <property type="match status" value="1"/>
</dbReference>
<dbReference type="Gene3D" id="3.20.20.70">
    <property type="entry name" value="Aldolase class I"/>
    <property type="match status" value="1"/>
</dbReference>
<dbReference type="HAMAP" id="MF_00734">
    <property type="entry name" value="LacD"/>
    <property type="match status" value="1"/>
</dbReference>
<dbReference type="InterPro" id="IPR013785">
    <property type="entry name" value="Aldolase_TIM"/>
</dbReference>
<dbReference type="InterPro" id="IPR002915">
    <property type="entry name" value="DeoC/FbaB/LacD_aldolase"/>
</dbReference>
<dbReference type="InterPro" id="IPR050552">
    <property type="entry name" value="LacD_aldolase"/>
</dbReference>
<dbReference type="InterPro" id="IPR005927">
    <property type="entry name" value="Tag_1.6-dipho_adolase"/>
</dbReference>
<dbReference type="NCBIfam" id="TIGR01232">
    <property type="entry name" value="lacD"/>
    <property type="match status" value="1"/>
</dbReference>
<dbReference type="NCBIfam" id="NF003180">
    <property type="entry name" value="PRK04161.1"/>
    <property type="match status" value="1"/>
</dbReference>
<dbReference type="NCBIfam" id="NF009065">
    <property type="entry name" value="PRK12399.1"/>
    <property type="match status" value="1"/>
</dbReference>
<dbReference type="NCBIfam" id="NF009498">
    <property type="entry name" value="PRK12858.1"/>
    <property type="match status" value="1"/>
</dbReference>
<dbReference type="PANTHER" id="PTHR39340">
    <property type="entry name" value="SULFOFRUCTOSEPHOSPHATE ALDOLASE"/>
    <property type="match status" value="1"/>
</dbReference>
<dbReference type="PANTHER" id="PTHR39340:SF1">
    <property type="entry name" value="SULFOFRUCTOSEPHOSPHATE ALDOLASE"/>
    <property type="match status" value="1"/>
</dbReference>
<dbReference type="Pfam" id="PF01791">
    <property type="entry name" value="DeoC"/>
    <property type="match status" value="1"/>
</dbReference>
<dbReference type="SMART" id="SM01133">
    <property type="entry name" value="DeoC"/>
    <property type="match status" value="1"/>
</dbReference>
<dbReference type="SUPFAM" id="SSF51569">
    <property type="entry name" value="Aldolase"/>
    <property type="match status" value="1"/>
</dbReference>